<feature type="chain" id="PRO_0000364479" description="Fructose-1,6-bisphosphatase class 1">
    <location>
        <begin position="1"/>
        <end position="340"/>
    </location>
</feature>
<feature type="binding site" evidence="1">
    <location>
        <position position="107"/>
    </location>
    <ligand>
        <name>Mg(2+)</name>
        <dbReference type="ChEBI" id="CHEBI:18420"/>
        <label>1</label>
    </ligand>
</feature>
<feature type="binding site" evidence="1">
    <location>
        <position position="126"/>
    </location>
    <ligand>
        <name>Mg(2+)</name>
        <dbReference type="ChEBI" id="CHEBI:18420"/>
        <label>1</label>
    </ligand>
</feature>
<feature type="binding site" evidence="1">
    <location>
        <position position="126"/>
    </location>
    <ligand>
        <name>Mg(2+)</name>
        <dbReference type="ChEBI" id="CHEBI:18420"/>
        <label>2</label>
    </ligand>
</feature>
<feature type="binding site" evidence="1">
    <location>
        <position position="128"/>
    </location>
    <ligand>
        <name>Mg(2+)</name>
        <dbReference type="ChEBI" id="CHEBI:18420"/>
        <label>1</label>
    </ligand>
</feature>
<feature type="binding site" evidence="1">
    <location>
        <position position="129"/>
    </location>
    <ligand>
        <name>Mg(2+)</name>
        <dbReference type="ChEBI" id="CHEBI:18420"/>
        <label>2</label>
    </ligand>
</feature>
<feature type="binding site" evidence="1">
    <location>
        <position position="215"/>
    </location>
    <ligand>
        <name>substrate</name>
    </ligand>
</feature>
<feature type="binding site" evidence="1">
    <location>
        <position position="287"/>
    </location>
    <ligand>
        <name>Mg(2+)</name>
        <dbReference type="ChEBI" id="CHEBI:18420"/>
        <label>2</label>
    </ligand>
</feature>
<name>F16PA_BRUC2</name>
<proteinExistence type="inferred from homology"/>
<reference key="1">
    <citation type="submission" date="2007-10" db="EMBL/GenBank/DDBJ databases">
        <title>Brucella canis ATCC 23365 whole genome shotgun sequencing project.</title>
        <authorList>
            <person name="Setubal J.C."/>
            <person name="Bowns C."/>
            <person name="Boyle S."/>
            <person name="Crasta O.R."/>
            <person name="Czar M.J."/>
            <person name="Dharmanolla C."/>
            <person name="Gillespie J.J."/>
            <person name="Kenyon R.W."/>
            <person name="Lu J."/>
            <person name="Mane S."/>
            <person name="Mohapatra S."/>
            <person name="Nagrani S."/>
            <person name="Purkayastha A."/>
            <person name="Rajasimha H.K."/>
            <person name="Shallom J.M."/>
            <person name="Shallom S."/>
            <person name="Shukla M."/>
            <person name="Snyder E.E."/>
            <person name="Sobral B.W."/>
            <person name="Wattam A.R."/>
            <person name="Will R."/>
            <person name="Williams K."/>
            <person name="Yoo H."/>
            <person name="Bruce D."/>
            <person name="Detter C."/>
            <person name="Munk C."/>
            <person name="Brettin T.S."/>
        </authorList>
    </citation>
    <scope>NUCLEOTIDE SEQUENCE [LARGE SCALE GENOMIC DNA]</scope>
    <source>
        <strain>ATCC 23365 / NCTC 10854 / RM-666</strain>
    </source>
</reference>
<organism>
    <name type="scientific">Brucella canis (strain ATCC 23365 / NCTC 10854 / RM-666)</name>
    <dbReference type="NCBI Taxonomy" id="483179"/>
    <lineage>
        <taxon>Bacteria</taxon>
        <taxon>Pseudomonadati</taxon>
        <taxon>Pseudomonadota</taxon>
        <taxon>Alphaproteobacteria</taxon>
        <taxon>Hyphomicrobiales</taxon>
        <taxon>Brucellaceae</taxon>
        <taxon>Brucella/Ochrobactrum group</taxon>
        <taxon>Brucella</taxon>
    </lineage>
</organism>
<protein>
    <recommendedName>
        <fullName evidence="1">Fructose-1,6-bisphosphatase class 1</fullName>
        <shortName evidence="1">FBPase class 1</shortName>
        <ecNumber evidence="1">3.1.3.11</ecNumber>
    </recommendedName>
    <alternativeName>
        <fullName evidence="1">D-fructose-1,6-bisphosphate 1-phosphohydrolase class 1</fullName>
    </alternativeName>
</protein>
<dbReference type="EC" id="3.1.3.11" evidence="1"/>
<dbReference type="EMBL" id="CP000873">
    <property type="protein sequence ID" value="ABX64041.1"/>
    <property type="molecule type" value="Genomic_DNA"/>
</dbReference>
<dbReference type="RefSeq" id="WP_004692176.1">
    <property type="nucleotide sequence ID" value="NC_010104.1"/>
</dbReference>
<dbReference type="SMR" id="A9MCF4"/>
<dbReference type="GeneID" id="55592511"/>
<dbReference type="KEGG" id="bcs:BCAN_B0890"/>
<dbReference type="HOGENOM" id="CLU_039977_0_0_5"/>
<dbReference type="PhylomeDB" id="A9MCF4"/>
<dbReference type="UniPathway" id="UPA00138"/>
<dbReference type="Proteomes" id="UP000001385">
    <property type="component" value="Chromosome II"/>
</dbReference>
<dbReference type="GO" id="GO:0005829">
    <property type="term" value="C:cytosol"/>
    <property type="evidence" value="ECO:0007669"/>
    <property type="project" value="TreeGrafter"/>
</dbReference>
<dbReference type="GO" id="GO:0042132">
    <property type="term" value="F:fructose 1,6-bisphosphate 1-phosphatase activity"/>
    <property type="evidence" value="ECO:0007669"/>
    <property type="project" value="UniProtKB-UniRule"/>
</dbReference>
<dbReference type="GO" id="GO:0000287">
    <property type="term" value="F:magnesium ion binding"/>
    <property type="evidence" value="ECO:0007669"/>
    <property type="project" value="UniProtKB-UniRule"/>
</dbReference>
<dbReference type="GO" id="GO:0030388">
    <property type="term" value="P:fructose 1,6-bisphosphate metabolic process"/>
    <property type="evidence" value="ECO:0007669"/>
    <property type="project" value="TreeGrafter"/>
</dbReference>
<dbReference type="GO" id="GO:0006002">
    <property type="term" value="P:fructose 6-phosphate metabolic process"/>
    <property type="evidence" value="ECO:0007669"/>
    <property type="project" value="TreeGrafter"/>
</dbReference>
<dbReference type="GO" id="GO:0006000">
    <property type="term" value="P:fructose metabolic process"/>
    <property type="evidence" value="ECO:0007669"/>
    <property type="project" value="TreeGrafter"/>
</dbReference>
<dbReference type="GO" id="GO:0006094">
    <property type="term" value="P:gluconeogenesis"/>
    <property type="evidence" value="ECO:0007669"/>
    <property type="project" value="UniProtKB-UniRule"/>
</dbReference>
<dbReference type="GO" id="GO:0005986">
    <property type="term" value="P:sucrose biosynthetic process"/>
    <property type="evidence" value="ECO:0007669"/>
    <property type="project" value="TreeGrafter"/>
</dbReference>
<dbReference type="CDD" id="cd00354">
    <property type="entry name" value="FBPase"/>
    <property type="match status" value="1"/>
</dbReference>
<dbReference type="Gene3D" id="3.40.190.80">
    <property type="match status" value="1"/>
</dbReference>
<dbReference type="Gene3D" id="3.30.540.10">
    <property type="entry name" value="Fructose-1,6-Bisphosphatase, subunit A, domain 1"/>
    <property type="match status" value="1"/>
</dbReference>
<dbReference type="HAMAP" id="MF_01855">
    <property type="entry name" value="FBPase_class1"/>
    <property type="match status" value="1"/>
</dbReference>
<dbReference type="InterPro" id="IPR044015">
    <property type="entry name" value="FBPase_C_dom"/>
</dbReference>
<dbReference type="InterPro" id="IPR000146">
    <property type="entry name" value="FBPase_class-1"/>
</dbReference>
<dbReference type="InterPro" id="IPR033391">
    <property type="entry name" value="FBPase_N"/>
</dbReference>
<dbReference type="InterPro" id="IPR028343">
    <property type="entry name" value="FBPtase"/>
</dbReference>
<dbReference type="InterPro" id="IPR020548">
    <property type="entry name" value="Fructose_bisphosphatase_AS"/>
</dbReference>
<dbReference type="NCBIfam" id="NF006780">
    <property type="entry name" value="PRK09293.1-4"/>
    <property type="match status" value="1"/>
</dbReference>
<dbReference type="PANTHER" id="PTHR11556">
    <property type="entry name" value="FRUCTOSE-1,6-BISPHOSPHATASE-RELATED"/>
    <property type="match status" value="1"/>
</dbReference>
<dbReference type="PANTHER" id="PTHR11556:SF35">
    <property type="entry name" value="SEDOHEPTULOSE-1,7-BISPHOSPHATASE, CHLOROPLASTIC"/>
    <property type="match status" value="1"/>
</dbReference>
<dbReference type="Pfam" id="PF00316">
    <property type="entry name" value="FBPase"/>
    <property type="match status" value="1"/>
</dbReference>
<dbReference type="Pfam" id="PF18913">
    <property type="entry name" value="FBPase_C"/>
    <property type="match status" value="1"/>
</dbReference>
<dbReference type="PIRSF" id="PIRSF500210">
    <property type="entry name" value="FBPtase"/>
    <property type="match status" value="1"/>
</dbReference>
<dbReference type="PIRSF" id="PIRSF000904">
    <property type="entry name" value="FBPtase_SBPase"/>
    <property type="match status" value="1"/>
</dbReference>
<dbReference type="PRINTS" id="PR00115">
    <property type="entry name" value="F16BPHPHTASE"/>
</dbReference>
<dbReference type="SUPFAM" id="SSF56655">
    <property type="entry name" value="Carbohydrate phosphatase"/>
    <property type="match status" value="1"/>
</dbReference>
<dbReference type="PROSITE" id="PS00124">
    <property type="entry name" value="FBPASE"/>
    <property type="match status" value="1"/>
</dbReference>
<accession>A9MCF4</accession>
<gene>
    <name evidence="1" type="primary">fbp</name>
    <name type="ordered locus">BCAN_B0890</name>
</gene>
<comment type="catalytic activity">
    <reaction evidence="1">
        <text>beta-D-fructose 1,6-bisphosphate + H2O = beta-D-fructose 6-phosphate + phosphate</text>
        <dbReference type="Rhea" id="RHEA:11064"/>
        <dbReference type="ChEBI" id="CHEBI:15377"/>
        <dbReference type="ChEBI" id="CHEBI:32966"/>
        <dbReference type="ChEBI" id="CHEBI:43474"/>
        <dbReference type="ChEBI" id="CHEBI:57634"/>
        <dbReference type="EC" id="3.1.3.11"/>
    </reaction>
</comment>
<comment type="cofactor">
    <cofactor evidence="1">
        <name>Mg(2+)</name>
        <dbReference type="ChEBI" id="CHEBI:18420"/>
    </cofactor>
    <text evidence="1">Binds 2 magnesium ions per subunit.</text>
</comment>
<comment type="pathway">
    <text evidence="1">Carbohydrate biosynthesis; gluconeogenesis.</text>
</comment>
<comment type="subunit">
    <text evidence="1">Homotetramer.</text>
</comment>
<comment type="subcellular location">
    <subcellularLocation>
        <location evidence="1">Cytoplasm</location>
    </subcellularLocation>
</comment>
<comment type="similarity">
    <text evidence="1">Belongs to the FBPase class 1 family.</text>
</comment>
<sequence length="340" mass="36101">MTLVGNFSPLVLVGDSDRVEAETVGAYLDGWAGHDKVRLATANAIKAILSGAGRLVGSIARGYLPGDPGKLVGVNSDQDQQKSIDVGSHNLFVELLIAAGVASILSEEADLPVAGKADGLVAVAIDPLDGSGNVGLGAPLGTIFSIFPADVEEPFLQPGNRQIAAGYVSYGNSVDLGFSVGEGVIFATLDPVSGQFHITRRNVKLPERTSDLAFNASVQRHLSAGMQAYVNDAFLGKDGPRGRNFNMRWLGAAVGDMHRIMQRGGLFFYVNDSRPGYEKGRLRLVYEANPIAFLAREAGGKATDGSRPILDIVPQTYHERSALVFGVAEELDILGEYFVK</sequence>
<keyword id="KW-0119">Carbohydrate metabolism</keyword>
<keyword id="KW-0963">Cytoplasm</keyword>
<keyword id="KW-0378">Hydrolase</keyword>
<keyword id="KW-0460">Magnesium</keyword>
<keyword id="KW-0479">Metal-binding</keyword>
<keyword id="KW-1185">Reference proteome</keyword>
<evidence type="ECO:0000255" key="1">
    <source>
        <dbReference type="HAMAP-Rule" id="MF_01855"/>
    </source>
</evidence>